<name>PAK5_RAT</name>
<keyword id="KW-0053">Apoptosis</keyword>
<keyword id="KW-0067">ATP-binding</keyword>
<keyword id="KW-0963">Cytoplasm</keyword>
<keyword id="KW-0418">Kinase</keyword>
<keyword id="KW-0496">Mitochondrion</keyword>
<keyword id="KW-0547">Nucleotide-binding</keyword>
<keyword id="KW-0539">Nucleus</keyword>
<keyword id="KW-0597">Phosphoprotein</keyword>
<keyword id="KW-1185">Reference proteome</keyword>
<keyword id="KW-0723">Serine/threonine-protein kinase</keyword>
<keyword id="KW-0808">Transferase</keyword>
<accession>D4A280</accession>
<organism>
    <name type="scientific">Rattus norvegicus</name>
    <name type="common">Rat</name>
    <dbReference type="NCBI Taxonomy" id="10116"/>
    <lineage>
        <taxon>Eukaryota</taxon>
        <taxon>Metazoa</taxon>
        <taxon>Chordata</taxon>
        <taxon>Craniata</taxon>
        <taxon>Vertebrata</taxon>
        <taxon>Euteleostomi</taxon>
        <taxon>Mammalia</taxon>
        <taxon>Eutheria</taxon>
        <taxon>Euarchontoglires</taxon>
        <taxon>Glires</taxon>
        <taxon>Rodentia</taxon>
        <taxon>Myomorpha</taxon>
        <taxon>Muroidea</taxon>
        <taxon>Muridae</taxon>
        <taxon>Murinae</taxon>
        <taxon>Rattus</taxon>
    </lineage>
</organism>
<evidence type="ECO:0000250" key="1"/>
<evidence type="ECO:0000255" key="2">
    <source>
        <dbReference type="PROSITE-ProRule" id="PRU00057"/>
    </source>
</evidence>
<evidence type="ECO:0000255" key="3">
    <source>
        <dbReference type="PROSITE-ProRule" id="PRU00159"/>
    </source>
</evidence>
<evidence type="ECO:0000256" key="4">
    <source>
        <dbReference type="SAM" id="MobiDB-lite"/>
    </source>
</evidence>
<evidence type="ECO:0000305" key="5"/>
<evidence type="ECO:0007744" key="6">
    <source>
    </source>
</evidence>
<dbReference type="EC" id="2.7.11.1"/>
<dbReference type="EMBL" id="CH473949">
    <property type="protein sequence ID" value="EDL80300.1"/>
    <property type="molecule type" value="Genomic_DNA"/>
</dbReference>
<dbReference type="RefSeq" id="NP_001101251.1">
    <property type="nucleotide sequence ID" value="NM_001107781.2"/>
</dbReference>
<dbReference type="RefSeq" id="NP_001420959.1">
    <property type="nucleotide sequence ID" value="NM_001434030.1"/>
</dbReference>
<dbReference type="RefSeq" id="NP_001420960.1">
    <property type="nucleotide sequence ID" value="NM_001434031.1"/>
</dbReference>
<dbReference type="RefSeq" id="XP_017447245.1">
    <property type="nucleotide sequence ID" value="XM_017591756.1"/>
</dbReference>
<dbReference type="RefSeq" id="XP_017447246.1">
    <property type="nucleotide sequence ID" value="XM_017591757.3"/>
</dbReference>
<dbReference type="RefSeq" id="XP_017447247.1">
    <property type="nucleotide sequence ID" value="XM_017591758.1"/>
</dbReference>
<dbReference type="SMR" id="D4A280"/>
<dbReference type="FunCoup" id="D4A280">
    <property type="interactions" value="2140"/>
</dbReference>
<dbReference type="STRING" id="10116.ENSRNOP00000071237"/>
<dbReference type="GlyGen" id="D4A280">
    <property type="glycosylation" value="1 site"/>
</dbReference>
<dbReference type="iPTMnet" id="D4A280"/>
<dbReference type="PhosphoSitePlus" id="D4A280"/>
<dbReference type="PaxDb" id="10116-ENSRNOP00000007410"/>
<dbReference type="PeptideAtlas" id="D4A280"/>
<dbReference type="Ensembl" id="ENSRNOT00000007410.5">
    <property type="protein sequence ID" value="ENSRNOP00000007410.3"/>
    <property type="gene ID" value="ENSRNOG00000005509.7"/>
</dbReference>
<dbReference type="GeneID" id="311450"/>
<dbReference type="KEGG" id="rno:311450"/>
<dbReference type="UCSC" id="RGD:1312009">
    <property type="organism name" value="rat"/>
</dbReference>
<dbReference type="AGR" id="RGD:1312009"/>
<dbReference type="CTD" id="57144"/>
<dbReference type="RGD" id="1312009">
    <property type="gene designation" value="Pak5"/>
</dbReference>
<dbReference type="eggNOG" id="KOG0578">
    <property type="taxonomic scope" value="Eukaryota"/>
</dbReference>
<dbReference type="GeneTree" id="ENSGT00940000158656"/>
<dbReference type="InParanoid" id="D4A280"/>
<dbReference type="OMA" id="KSHPQGH"/>
<dbReference type="OrthoDB" id="1022360at2759"/>
<dbReference type="PhylomeDB" id="D4A280"/>
<dbReference type="TreeFam" id="TF105352"/>
<dbReference type="Reactome" id="R-RNO-9013149">
    <property type="pathway name" value="RAC1 GTPase cycle"/>
</dbReference>
<dbReference type="Reactome" id="R-RNO-9013405">
    <property type="pathway name" value="RHOD GTPase cycle"/>
</dbReference>
<dbReference type="Reactome" id="R-RNO-9013407">
    <property type="pathway name" value="RHOH GTPase cycle"/>
</dbReference>
<dbReference type="PRO" id="PR:D4A280"/>
<dbReference type="Proteomes" id="UP000002494">
    <property type="component" value="Chromosome 3"/>
</dbReference>
<dbReference type="Proteomes" id="UP000234681">
    <property type="component" value="Chromosome 3"/>
</dbReference>
<dbReference type="Bgee" id="ENSRNOG00000005509">
    <property type="expression patterns" value="Expressed in frontal cortex and 1 other cell type or tissue"/>
</dbReference>
<dbReference type="GO" id="GO:0005737">
    <property type="term" value="C:cytoplasm"/>
    <property type="evidence" value="ECO:0000318"/>
    <property type="project" value="GO_Central"/>
</dbReference>
<dbReference type="GO" id="GO:0005739">
    <property type="term" value="C:mitochondrion"/>
    <property type="evidence" value="ECO:0000266"/>
    <property type="project" value="RGD"/>
</dbReference>
<dbReference type="GO" id="GO:0005634">
    <property type="term" value="C:nucleus"/>
    <property type="evidence" value="ECO:0007669"/>
    <property type="project" value="UniProtKB-SubCell"/>
</dbReference>
<dbReference type="GO" id="GO:0045202">
    <property type="term" value="C:synapse"/>
    <property type="evidence" value="ECO:0000266"/>
    <property type="project" value="RGD"/>
</dbReference>
<dbReference type="GO" id="GO:0005524">
    <property type="term" value="F:ATP binding"/>
    <property type="evidence" value="ECO:0007669"/>
    <property type="project" value="UniProtKB-KW"/>
</dbReference>
<dbReference type="GO" id="GO:0106310">
    <property type="term" value="F:protein serine kinase activity"/>
    <property type="evidence" value="ECO:0007669"/>
    <property type="project" value="RHEA"/>
</dbReference>
<dbReference type="GO" id="GO:0004674">
    <property type="term" value="F:protein serine/threonine kinase activity"/>
    <property type="evidence" value="ECO:0000266"/>
    <property type="project" value="RGD"/>
</dbReference>
<dbReference type="GO" id="GO:0006915">
    <property type="term" value="P:apoptotic process"/>
    <property type="evidence" value="ECO:0007669"/>
    <property type="project" value="UniProtKB-KW"/>
</dbReference>
<dbReference type="GO" id="GO:0009267">
    <property type="term" value="P:cellular response to starvation"/>
    <property type="evidence" value="ECO:0000318"/>
    <property type="project" value="GO_Central"/>
</dbReference>
<dbReference type="GO" id="GO:0007010">
    <property type="term" value="P:cytoskeleton organization"/>
    <property type="evidence" value="ECO:0007669"/>
    <property type="project" value="InterPro"/>
</dbReference>
<dbReference type="GO" id="GO:0035556">
    <property type="term" value="P:intracellular signal transduction"/>
    <property type="evidence" value="ECO:0000318"/>
    <property type="project" value="GO_Central"/>
</dbReference>
<dbReference type="GO" id="GO:0007612">
    <property type="term" value="P:learning"/>
    <property type="evidence" value="ECO:0000266"/>
    <property type="project" value="RGD"/>
</dbReference>
<dbReference type="GO" id="GO:0007626">
    <property type="term" value="P:locomotory behavior"/>
    <property type="evidence" value="ECO:0000266"/>
    <property type="project" value="RGD"/>
</dbReference>
<dbReference type="GO" id="GO:0007613">
    <property type="term" value="P:memory"/>
    <property type="evidence" value="ECO:0000266"/>
    <property type="project" value="RGD"/>
</dbReference>
<dbReference type="GO" id="GO:2001237">
    <property type="term" value="P:negative regulation of extrinsic apoptotic signaling pathway"/>
    <property type="evidence" value="ECO:0000266"/>
    <property type="project" value="RGD"/>
</dbReference>
<dbReference type="GO" id="GO:0043408">
    <property type="term" value="P:regulation of MAPK cascade"/>
    <property type="evidence" value="ECO:0000318"/>
    <property type="project" value="GO_Central"/>
</dbReference>
<dbReference type="CDD" id="cd01093">
    <property type="entry name" value="CRIB_PAK_like"/>
    <property type="match status" value="1"/>
</dbReference>
<dbReference type="CDD" id="cd06658">
    <property type="entry name" value="STKc_PAK5"/>
    <property type="match status" value="1"/>
</dbReference>
<dbReference type="FunFam" id="1.10.510.10:FF:000073">
    <property type="entry name" value="Non-specific serine/threonine protein kinase"/>
    <property type="match status" value="1"/>
</dbReference>
<dbReference type="FunFam" id="3.30.200.20:FF:000141">
    <property type="entry name" value="Non-specific serine/threonine protein kinase"/>
    <property type="match status" value="1"/>
</dbReference>
<dbReference type="FunFam" id="3.90.810.10:FF:000002">
    <property type="entry name" value="Non-specific serine/threonine protein kinase"/>
    <property type="match status" value="1"/>
</dbReference>
<dbReference type="Gene3D" id="3.90.810.10">
    <property type="entry name" value="CRIB domain"/>
    <property type="match status" value="1"/>
</dbReference>
<dbReference type="Gene3D" id="3.30.200.20">
    <property type="entry name" value="Phosphorylase Kinase, domain 1"/>
    <property type="match status" value="1"/>
</dbReference>
<dbReference type="Gene3D" id="1.10.510.10">
    <property type="entry name" value="Transferase(Phosphotransferase) domain 1"/>
    <property type="match status" value="1"/>
</dbReference>
<dbReference type="InterPro" id="IPR000095">
    <property type="entry name" value="CRIB_dom"/>
</dbReference>
<dbReference type="InterPro" id="IPR036936">
    <property type="entry name" value="CRIB_dom_sf"/>
</dbReference>
<dbReference type="InterPro" id="IPR011009">
    <property type="entry name" value="Kinase-like_dom_sf"/>
</dbReference>
<dbReference type="InterPro" id="IPR051931">
    <property type="entry name" value="PAK3-like"/>
</dbReference>
<dbReference type="InterPro" id="IPR033923">
    <property type="entry name" value="PAK_BD"/>
</dbReference>
<dbReference type="InterPro" id="IPR000719">
    <property type="entry name" value="Prot_kinase_dom"/>
</dbReference>
<dbReference type="InterPro" id="IPR017441">
    <property type="entry name" value="Protein_kinase_ATP_BS"/>
</dbReference>
<dbReference type="InterPro" id="IPR028754">
    <property type="entry name" value="STKc_PAK5"/>
</dbReference>
<dbReference type="PANTHER" id="PTHR45832:SF4">
    <property type="entry name" value="NON-SPECIFIC SERINE_THREONINE PROTEIN KINASE"/>
    <property type="match status" value="1"/>
</dbReference>
<dbReference type="PANTHER" id="PTHR45832">
    <property type="entry name" value="SERINE/THREONINE-PROTEIN KINASE SAMKA-RELATED-RELATED"/>
    <property type="match status" value="1"/>
</dbReference>
<dbReference type="Pfam" id="PF00786">
    <property type="entry name" value="PBD"/>
    <property type="match status" value="1"/>
</dbReference>
<dbReference type="Pfam" id="PF00069">
    <property type="entry name" value="Pkinase"/>
    <property type="match status" value="1"/>
</dbReference>
<dbReference type="SMART" id="SM00285">
    <property type="entry name" value="PBD"/>
    <property type="match status" value="1"/>
</dbReference>
<dbReference type="SUPFAM" id="SSF56112">
    <property type="entry name" value="Protein kinase-like (PK-like)"/>
    <property type="match status" value="1"/>
</dbReference>
<dbReference type="PROSITE" id="PS50108">
    <property type="entry name" value="CRIB"/>
    <property type="match status" value="1"/>
</dbReference>
<dbReference type="PROSITE" id="PS00107">
    <property type="entry name" value="PROTEIN_KINASE_ATP"/>
    <property type="match status" value="1"/>
</dbReference>
<dbReference type="PROSITE" id="PS50011">
    <property type="entry name" value="PROTEIN_KINASE_DOM"/>
    <property type="match status" value="1"/>
</dbReference>
<feature type="chain" id="PRO_0000413066" description="Serine/threonine-protein kinase PAK 5">
    <location>
        <begin position="1"/>
        <end position="718"/>
    </location>
</feature>
<feature type="domain" description="CRIB" evidence="2">
    <location>
        <begin position="11"/>
        <end position="24"/>
    </location>
</feature>
<feature type="domain" description="Protein kinase" evidence="3">
    <location>
        <begin position="448"/>
        <end position="699"/>
    </location>
</feature>
<feature type="region of interest" description="Disordered" evidence="4">
    <location>
        <begin position="1"/>
        <end position="29"/>
    </location>
</feature>
<feature type="region of interest" description="Linker" evidence="1">
    <location>
        <begin position="25"/>
        <end position="447"/>
    </location>
</feature>
<feature type="region of interest" description="Disordered" evidence="4">
    <location>
        <begin position="96"/>
        <end position="119"/>
    </location>
</feature>
<feature type="region of interest" description="Disordered" evidence="4">
    <location>
        <begin position="226"/>
        <end position="245"/>
    </location>
</feature>
<feature type="region of interest" description="Disordered" evidence="4">
    <location>
        <begin position="264"/>
        <end position="296"/>
    </location>
</feature>
<feature type="region of interest" description="Disordered" evidence="4">
    <location>
        <begin position="339"/>
        <end position="371"/>
    </location>
</feature>
<feature type="compositionally biased region" description="Polar residues" evidence="4">
    <location>
        <begin position="226"/>
        <end position="244"/>
    </location>
</feature>
<feature type="compositionally biased region" description="Low complexity" evidence="4">
    <location>
        <begin position="359"/>
        <end position="371"/>
    </location>
</feature>
<feature type="active site" description="Proton acceptor" evidence="3">
    <location>
        <position position="567"/>
    </location>
</feature>
<feature type="binding site" evidence="3">
    <location>
        <begin position="454"/>
        <end position="462"/>
    </location>
    <ligand>
        <name>ATP</name>
        <dbReference type="ChEBI" id="CHEBI:30616"/>
    </ligand>
</feature>
<feature type="binding site" evidence="3">
    <location>
        <position position="477"/>
    </location>
    <ligand>
        <name>ATP</name>
        <dbReference type="ChEBI" id="CHEBI:30616"/>
    </ligand>
</feature>
<feature type="modified residue" description="Phosphoserine" evidence="6">
    <location>
        <position position="104"/>
    </location>
</feature>
<feature type="modified residue" description="Phosphothreonine" evidence="6">
    <location>
        <position position="107"/>
    </location>
</feature>
<protein>
    <recommendedName>
        <fullName>Serine/threonine-protein kinase PAK 5</fullName>
        <ecNumber>2.7.11.1</ecNumber>
    </recommendedName>
    <alternativeName>
        <fullName>p21-activated kinase 5</fullName>
        <shortName>PAK-5</shortName>
    </alternativeName>
    <alternativeName>
        <fullName>p21-activated kinase 7</fullName>
        <shortName>PAK-7</shortName>
    </alternativeName>
</protein>
<comment type="function">
    <text evidence="1">Serine/threonine protein kinase that plays a role in a variety of different signaling pathways including cytoskeleton regulation, cell migration, proliferation or cell survival. Activation by various effectors including growth factor receptors or active CDC42 and RAC1 results in a conformational change and a subsequent autophosphorylation on several serine and/or threonine residues. Phosphorylates the proto-oncogene RAF and stimulates its kinase activity. Promotes cell survival by phosphorylating the BCL2 antagonist of cell death BAD. Phosphorylates CTNND1, probably to regulate cytoskeletal organization and cell morphology. Keeps microtubules stable through MARK2 inhibition and destabilizes the F-actin network leading to the disappearance of stress fibers and focal adhesions (By similarity).</text>
</comment>
<comment type="catalytic activity">
    <reaction>
        <text>L-seryl-[protein] + ATP = O-phospho-L-seryl-[protein] + ADP + H(+)</text>
        <dbReference type="Rhea" id="RHEA:17989"/>
        <dbReference type="Rhea" id="RHEA-COMP:9863"/>
        <dbReference type="Rhea" id="RHEA-COMP:11604"/>
        <dbReference type="ChEBI" id="CHEBI:15378"/>
        <dbReference type="ChEBI" id="CHEBI:29999"/>
        <dbReference type="ChEBI" id="CHEBI:30616"/>
        <dbReference type="ChEBI" id="CHEBI:83421"/>
        <dbReference type="ChEBI" id="CHEBI:456216"/>
        <dbReference type="EC" id="2.7.11.1"/>
    </reaction>
</comment>
<comment type="catalytic activity">
    <reaction>
        <text>L-threonyl-[protein] + ATP = O-phospho-L-threonyl-[protein] + ADP + H(+)</text>
        <dbReference type="Rhea" id="RHEA:46608"/>
        <dbReference type="Rhea" id="RHEA-COMP:11060"/>
        <dbReference type="Rhea" id="RHEA-COMP:11605"/>
        <dbReference type="ChEBI" id="CHEBI:15378"/>
        <dbReference type="ChEBI" id="CHEBI:30013"/>
        <dbReference type="ChEBI" id="CHEBI:30616"/>
        <dbReference type="ChEBI" id="CHEBI:61977"/>
        <dbReference type="ChEBI" id="CHEBI:456216"/>
        <dbReference type="EC" id="2.7.11.1"/>
    </reaction>
</comment>
<comment type="subunit">
    <text evidence="1">Interacts tightly with GTP-bound but not GDP-bound CDC42/p21 and RAC1. Interacts with MARK2, leading to inhibit MARK2 independently of kinase activity. Interacts with RHOD and RHOH (By similarity).</text>
</comment>
<comment type="subcellular location">
    <subcellularLocation>
        <location evidence="1">Mitochondrion</location>
    </subcellularLocation>
    <subcellularLocation>
        <location evidence="1">Cytoplasm</location>
    </subcellularLocation>
    <subcellularLocation>
        <location evidence="1">Nucleus</location>
    </subcellularLocation>
    <text evidence="1">Shuttles between the nucleus and the mitochondria, and mitochondrial localization is essential for the role in cell survival.</text>
</comment>
<comment type="domain">
    <text evidence="1">An autoinhibitory domain is present in the N-terminal region of the protein.</text>
</comment>
<comment type="PTM">
    <text evidence="1">Autophosphorylated when activated by CDC42/p21.</text>
</comment>
<comment type="similarity">
    <text evidence="5">Belongs to the protein kinase superfamily. STE Ser/Thr protein kinase family. STE20 subfamily.</text>
</comment>
<sequence length="718" mass="80949">MFGKKKKKIEISGPSNFEHRVHTGFDPQEQKFTGLPQQWHSLLADTANRPKPMVDPSCITPIQLAPMKTIVRGNKSCKESSINGLLEDFDNISVTRSNSLRKESPPTPDQGAASRIQGHSEENGFITFSQYSSESDTTTDYTTEKYRDRSLYGDDLDLYYRGSHAAKQNGHAMKMKHGDAYYPEMKPLKSDLARFPVDYHTHLDSLSKASEYGDLKWDYQRASSSSPLDYSFQLTPSRTAGTSRCSKESLAYSESDWGPSFDDYDRRPKSSYLHQTSPQPAMRQRSKSGSGLQEPMMPFGASAFKTHPQGHSYNSYTYPRLSEPTMCIPKVDYDRAQMVFSPPLSGSDTYPRGPTKLPQSQSKVGYSSSSHQYPGYHKASLYHHPSLQTSSQYISTASYLSSLSISSSTYPPPSWGSSSDQQPSRVSHEQFRAALQLVVSPGDPREYLDNFIKIGEGSTGIVCIATEKHTGKQVAVKKMDLRKQQRRELLFNEVVIMRDYHHDNVVDMYNSYLVGDELWVVMEFLEGGALTDIVTHTRMNEEQIATVCLSVLKALSYLHNQGVIHRDIKSDSILLTSDGRIKLSDFGFCAQVSKEVPKRKSLVGTPYWMAPEVISRLPYGTEVDIWSLGIMVIEMIDGEPPYFNEPPLQAMRRIRDSLPPRVKDLHKVSSMLRGFLDLMLVREPSQRATAQELLGHPFLKLAGPPSCIVPLMRQYRHH</sequence>
<proteinExistence type="evidence at protein level"/>
<gene>
    <name type="primary">Pak5</name>
    <name type="synonym">Pak7</name>
</gene>
<reference key="1">
    <citation type="submission" date="2005-07" db="EMBL/GenBank/DDBJ databases">
        <authorList>
            <person name="Mural R.J."/>
            <person name="Adams M.D."/>
            <person name="Myers E.W."/>
            <person name="Smith H.O."/>
            <person name="Venter J.C."/>
        </authorList>
    </citation>
    <scope>NUCLEOTIDE SEQUENCE [LARGE SCALE GENOMIC DNA]</scope>
</reference>
<reference key="2">
    <citation type="journal article" date="2005" name="Mol. Biol. Cell">
        <title>PAK5 kinase is an inhibitor of MARK/Par-1, which leads to stable microtubules and dynamic actin.</title>
        <authorList>
            <person name="Matenia D."/>
            <person name="Griesshaber B."/>
            <person name="Li X.Y."/>
            <person name="Thiessen A."/>
            <person name="Johne C."/>
            <person name="Jiao J."/>
            <person name="Mandelkow E."/>
            <person name="Mandelkow E.M."/>
        </authorList>
    </citation>
    <scope>INTERACTION WITH MARK2</scope>
</reference>
<reference key="3">
    <citation type="journal article" date="2012" name="Nat. Commun.">
        <title>Quantitative maps of protein phosphorylation sites across 14 different rat organs and tissues.</title>
        <authorList>
            <person name="Lundby A."/>
            <person name="Secher A."/>
            <person name="Lage K."/>
            <person name="Nordsborg N.B."/>
            <person name="Dmytriyev A."/>
            <person name="Lundby C."/>
            <person name="Olsen J.V."/>
        </authorList>
    </citation>
    <scope>PHOSPHORYLATION [LARGE SCALE ANALYSIS] AT SER-104 AND THR-107</scope>
    <scope>IDENTIFICATION BY MASS SPECTROMETRY [LARGE SCALE ANALYSIS]</scope>
</reference>